<organism>
    <name type="scientific">Francisella tularensis subsp. tularensis (strain FSC 198)</name>
    <dbReference type="NCBI Taxonomy" id="393115"/>
    <lineage>
        <taxon>Bacteria</taxon>
        <taxon>Pseudomonadati</taxon>
        <taxon>Pseudomonadota</taxon>
        <taxon>Gammaproteobacteria</taxon>
        <taxon>Thiotrichales</taxon>
        <taxon>Francisellaceae</taxon>
        <taxon>Francisella</taxon>
    </lineage>
</organism>
<dbReference type="EMBL" id="AM286280">
    <property type="protein sequence ID" value="CAL08691.1"/>
    <property type="molecule type" value="Genomic_DNA"/>
</dbReference>
<dbReference type="RefSeq" id="WP_003018840.1">
    <property type="nucleotide sequence ID" value="NC_008245.1"/>
</dbReference>
<dbReference type="SMR" id="Q14IF3"/>
<dbReference type="GeneID" id="75265258"/>
<dbReference type="KEGG" id="ftf:FTF0675"/>
<dbReference type="HOGENOM" id="CLU_137946_0_0_6"/>
<dbReference type="GO" id="GO:0022625">
    <property type="term" value="C:cytosolic large ribosomal subunit"/>
    <property type="evidence" value="ECO:0007669"/>
    <property type="project" value="TreeGrafter"/>
</dbReference>
<dbReference type="GO" id="GO:0008097">
    <property type="term" value="F:5S rRNA binding"/>
    <property type="evidence" value="ECO:0007669"/>
    <property type="project" value="InterPro"/>
</dbReference>
<dbReference type="GO" id="GO:0003735">
    <property type="term" value="F:structural constituent of ribosome"/>
    <property type="evidence" value="ECO:0007669"/>
    <property type="project" value="InterPro"/>
</dbReference>
<dbReference type="GO" id="GO:0006412">
    <property type="term" value="P:translation"/>
    <property type="evidence" value="ECO:0007669"/>
    <property type="project" value="UniProtKB-UniRule"/>
</dbReference>
<dbReference type="CDD" id="cd00495">
    <property type="entry name" value="Ribosomal_L25_TL5_CTC"/>
    <property type="match status" value="1"/>
</dbReference>
<dbReference type="FunFam" id="2.40.240.10:FF:000002">
    <property type="entry name" value="50S ribosomal protein L25"/>
    <property type="match status" value="1"/>
</dbReference>
<dbReference type="Gene3D" id="2.40.240.10">
    <property type="entry name" value="Ribosomal Protein L25, Chain P"/>
    <property type="match status" value="1"/>
</dbReference>
<dbReference type="HAMAP" id="MF_01336">
    <property type="entry name" value="Ribosomal_bL25"/>
    <property type="match status" value="1"/>
</dbReference>
<dbReference type="InterPro" id="IPR020056">
    <property type="entry name" value="Rbsml_bL25/Gln-tRNA_synth_N"/>
</dbReference>
<dbReference type="InterPro" id="IPR011035">
    <property type="entry name" value="Ribosomal_bL25/Gln-tRNA_synth"/>
</dbReference>
<dbReference type="InterPro" id="IPR001021">
    <property type="entry name" value="Ribosomal_bL25_long"/>
</dbReference>
<dbReference type="InterPro" id="IPR020055">
    <property type="entry name" value="Ribosomal_bL25_short"/>
</dbReference>
<dbReference type="InterPro" id="IPR029751">
    <property type="entry name" value="Ribosomal_L25_dom"/>
</dbReference>
<dbReference type="InterPro" id="IPR020930">
    <property type="entry name" value="Ribosomal_uL5_bac-type"/>
</dbReference>
<dbReference type="NCBIfam" id="TIGR00731">
    <property type="entry name" value="bL25_bact_ctc"/>
    <property type="match status" value="1"/>
</dbReference>
<dbReference type="NCBIfam" id="NF004612">
    <property type="entry name" value="PRK05943.1"/>
    <property type="match status" value="1"/>
</dbReference>
<dbReference type="PANTHER" id="PTHR33284">
    <property type="entry name" value="RIBOSOMAL PROTEIN L25/GLN-TRNA SYNTHETASE, ANTI-CODON-BINDING DOMAIN-CONTAINING PROTEIN"/>
    <property type="match status" value="1"/>
</dbReference>
<dbReference type="PANTHER" id="PTHR33284:SF1">
    <property type="entry name" value="RIBOSOMAL PROTEIN L25_GLN-TRNA SYNTHETASE, ANTI-CODON-BINDING DOMAIN-CONTAINING PROTEIN"/>
    <property type="match status" value="1"/>
</dbReference>
<dbReference type="Pfam" id="PF01386">
    <property type="entry name" value="Ribosomal_L25p"/>
    <property type="match status" value="1"/>
</dbReference>
<dbReference type="SUPFAM" id="SSF50715">
    <property type="entry name" value="Ribosomal protein L25-like"/>
    <property type="match status" value="1"/>
</dbReference>
<feature type="chain" id="PRO_1000052952" description="Large ribosomal subunit protein bL25">
    <location>
        <begin position="1"/>
        <end position="96"/>
    </location>
</feature>
<keyword id="KW-0687">Ribonucleoprotein</keyword>
<keyword id="KW-0689">Ribosomal protein</keyword>
<keyword id="KW-0694">RNA-binding</keyword>
<keyword id="KW-0699">rRNA-binding</keyword>
<comment type="function">
    <text evidence="1">This is one of the proteins that binds to the 5S RNA in the ribosome where it forms part of the central protuberance.</text>
</comment>
<comment type="subunit">
    <text evidence="1">Part of the 50S ribosomal subunit; part of the 5S rRNA/L5/L18/L25 subcomplex. Contacts the 5S rRNA. Binds to the 5S rRNA independently of L5 and L18.</text>
</comment>
<comment type="similarity">
    <text evidence="1">Belongs to the bacterial ribosomal protein bL25 family.</text>
</comment>
<gene>
    <name evidence="1" type="primary">rplY</name>
    <name type="ordered locus">FTF0675</name>
</gene>
<protein>
    <recommendedName>
        <fullName evidence="1">Large ribosomal subunit protein bL25</fullName>
    </recommendedName>
    <alternativeName>
        <fullName evidence="2">50S ribosomal protein L25</fullName>
    </alternativeName>
</protein>
<accession>Q14IF3</accession>
<sequence>MANFVLKAEKREDLGTGASRRLRRAGKIPAVIYGGEKEAVSVLLDHDKVLHSTEDKAFFSSEITLDIDGKQEKVIIKALQRHPYKVKLIHADFMRV</sequence>
<proteinExistence type="inferred from homology"/>
<evidence type="ECO:0000255" key="1">
    <source>
        <dbReference type="HAMAP-Rule" id="MF_01336"/>
    </source>
</evidence>
<evidence type="ECO:0000305" key="2"/>
<name>RL25_FRAT1</name>
<reference key="1">
    <citation type="journal article" date="2007" name="PLoS ONE">
        <title>Genome sequencing shows that European isolates of Francisella tularensis subspecies tularensis are almost identical to US laboratory strain Schu S4.</title>
        <authorList>
            <person name="Chaudhuri R.R."/>
            <person name="Ren C.-P."/>
            <person name="Desmond L."/>
            <person name="Vincent G.A."/>
            <person name="Silman N.J."/>
            <person name="Brehm J.K."/>
            <person name="Elmore M.J."/>
            <person name="Hudson M.J."/>
            <person name="Forsman M."/>
            <person name="Isherwood K.E."/>
            <person name="Gurycova D."/>
            <person name="Minton N.P."/>
            <person name="Titball R.W."/>
            <person name="Pallen M.J."/>
            <person name="Vipond R."/>
        </authorList>
    </citation>
    <scope>NUCLEOTIDE SEQUENCE [LARGE SCALE GENOMIC DNA]</scope>
    <source>
        <strain>FSC 198</strain>
    </source>
</reference>